<gene>
    <name evidence="1" type="primary">mscL</name>
    <name type="ordered locus">XF_0039</name>
</gene>
<evidence type="ECO:0000255" key="1">
    <source>
        <dbReference type="HAMAP-Rule" id="MF_00115"/>
    </source>
</evidence>
<proteinExistence type="inferred from homology"/>
<name>MSCL_XYLFA</name>
<comment type="function">
    <text evidence="1">Channel that opens in response to stretch forces in the membrane lipid bilayer. May participate in the regulation of osmotic pressure changes within the cell.</text>
</comment>
<comment type="subunit">
    <text evidence="1">Homopentamer.</text>
</comment>
<comment type="subcellular location">
    <subcellularLocation>
        <location evidence="1">Cell inner membrane</location>
        <topology evidence="1">Multi-pass membrane protein</topology>
    </subcellularLocation>
</comment>
<comment type="similarity">
    <text evidence="1">Belongs to the MscL family.</text>
</comment>
<reference key="1">
    <citation type="journal article" date="2000" name="Nature">
        <title>The genome sequence of the plant pathogen Xylella fastidiosa.</title>
        <authorList>
            <person name="Simpson A.J.G."/>
            <person name="Reinach F.C."/>
            <person name="Arruda P."/>
            <person name="Abreu F.A."/>
            <person name="Acencio M."/>
            <person name="Alvarenga R."/>
            <person name="Alves L.M.C."/>
            <person name="Araya J.E."/>
            <person name="Baia G.S."/>
            <person name="Baptista C.S."/>
            <person name="Barros M.H."/>
            <person name="Bonaccorsi E.D."/>
            <person name="Bordin S."/>
            <person name="Bove J.M."/>
            <person name="Briones M.R.S."/>
            <person name="Bueno M.R.P."/>
            <person name="Camargo A.A."/>
            <person name="Camargo L.E.A."/>
            <person name="Carraro D.M."/>
            <person name="Carrer H."/>
            <person name="Colauto N.B."/>
            <person name="Colombo C."/>
            <person name="Costa F.F."/>
            <person name="Costa M.C.R."/>
            <person name="Costa-Neto C.M."/>
            <person name="Coutinho L.L."/>
            <person name="Cristofani M."/>
            <person name="Dias-Neto E."/>
            <person name="Docena C."/>
            <person name="El-Dorry H."/>
            <person name="Facincani A.P."/>
            <person name="Ferreira A.J.S."/>
            <person name="Ferreira V.C.A."/>
            <person name="Ferro J.A."/>
            <person name="Fraga J.S."/>
            <person name="Franca S.C."/>
            <person name="Franco M.C."/>
            <person name="Frohme M."/>
            <person name="Furlan L.R."/>
            <person name="Garnier M."/>
            <person name="Goldman G.H."/>
            <person name="Goldman M.H.S."/>
            <person name="Gomes S.L."/>
            <person name="Gruber A."/>
            <person name="Ho P.L."/>
            <person name="Hoheisel J.D."/>
            <person name="Junqueira M.L."/>
            <person name="Kemper E.L."/>
            <person name="Kitajima J.P."/>
            <person name="Krieger J.E."/>
            <person name="Kuramae E.E."/>
            <person name="Laigret F."/>
            <person name="Lambais M.R."/>
            <person name="Leite L.C.C."/>
            <person name="Lemos E.G.M."/>
            <person name="Lemos M.V.F."/>
            <person name="Lopes S.A."/>
            <person name="Lopes C.R."/>
            <person name="Machado J.A."/>
            <person name="Machado M.A."/>
            <person name="Madeira A.M.B.N."/>
            <person name="Madeira H.M.F."/>
            <person name="Marino C.L."/>
            <person name="Marques M.V."/>
            <person name="Martins E.A.L."/>
            <person name="Martins E.M.F."/>
            <person name="Matsukuma A.Y."/>
            <person name="Menck C.F.M."/>
            <person name="Miracca E.C."/>
            <person name="Miyaki C.Y."/>
            <person name="Monteiro-Vitorello C.B."/>
            <person name="Moon D.H."/>
            <person name="Nagai M.A."/>
            <person name="Nascimento A.L.T.O."/>
            <person name="Netto L.E.S."/>
            <person name="Nhani A. Jr."/>
            <person name="Nobrega F.G."/>
            <person name="Nunes L.R."/>
            <person name="Oliveira M.A."/>
            <person name="de Oliveira M.C."/>
            <person name="de Oliveira R.C."/>
            <person name="Palmieri D.A."/>
            <person name="Paris A."/>
            <person name="Peixoto B.R."/>
            <person name="Pereira G.A.G."/>
            <person name="Pereira H.A. Jr."/>
            <person name="Pesquero J.B."/>
            <person name="Quaggio R.B."/>
            <person name="Roberto P.G."/>
            <person name="Rodrigues V."/>
            <person name="de Rosa A.J.M."/>
            <person name="de Rosa V.E. Jr."/>
            <person name="de Sa R.G."/>
            <person name="Santelli R.V."/>
            <person name="Sawasaki H.E."/>
            <person name="da Silva A.C.R."/>
            <person name="da Silva A.M."/>
            <person name="da Silva F.R."/>
            <person name="Silva W.A. Jr."/>
            <person name="da Silveira J.F."/>
            <person name="Silvestri M.L.Z."/>
            <person name="Siqueira W.J."/>
            <person name="de Souza A.A."/>
            <person name="de Souza A.P."/>
            <person name="Terenzi M.F."/>
            <person name="Truffi D."/>
            <person name="Tsai S.M."/>
            <person name="Tsuhako M.H."/>
            <person name="Vallada H."/>
            <person name="Van Sluys M.A."/>
            <person name="Verjovski-Almeida S."/>
            <person name="Vettore A.L."/>
            <person name="Zago M.A."/>
            <person name="Zatz M."/>
            <person name="Meidanis J."/>
            <person name="Setubal J.C."/>
        </authorList>
    </citation>
    <scope>NUCLEOTIDE SEQUENCE [LARGE SCALE GENOMIC DNA]</scope>
    <source>
        <strain>9a5c</strain>
    </source>
</reference>
<protein>
    <recommendedName>
        <fullName evidence="1">Large-conductance mechanosensitive channel</fullName>
    </recommendedName>
</protein>
<feature type="chain" id="PRO_0000192471" description="Large-conductance mechanosensitive channel">
    <location>
        <begin position="1"/>
        <end position="134"/>
    </location>
</feature>
<feature type="transmembrane region" description="Helical" evidence="1">
    <location>
        <begin position="16"/>
        <end position="36"/>
    </location>
</feature>
<feature type="transmembrane region" description="Helical" evidence="1">
    <location>
        <begin position="81"/>
        <end position="101"/>
    </location>
</feature>
<organism>
    <name type="scientific">Xylella fastidiosa (strain 9a5c)</name>
    <dbReference type="NCBI Taxonomy" id="160492"/>
    <lineage>
        <taxon>Bacteria</taxon>
        <taxon>Pseudomonadati</taxon>
        <taxon>Pseudomonadota</taxon>
        <taxon>Gammaproteobacteria</taxon>
        <taxon>Lysobacterales</taxon>
        <taxon>Lysobacteraceae</taxon>
        <taxon>Xylella</taxon>
    </lineage>
</organism>
<accession>Q9PHA5</accession>
<keyword id="KW-0997">Cell inner membrane</keyword>
<keyword id="KW-1003">Cell membrane</keyword>
<keyword id="KW-0407">Ion channel</keyword>
<keyword id="KW-0406">Ion transport</keyword>
<keyword id="KW-0472">Membrane</keyword>
<keyword id="KW-0812">Transmembrane</keyword>
<keyword id="KW-1133">Transmembrane helix</keyword>
<keyword id="KW-0813">Transport</keyword>
<dbReference type="EMBL" id="AE003849">
    <property type="protein sequence ID" value="AAF82852.1"/>
    <property type="molecule type" value="Genomic_DNA"/>
</dbReference>
<dbReference type="PIR" id="F82855">
    <property type="entry name" value="F82855"/>
</dbReference>
<dbReference type="RefSeq" id="WP_010892588.1">
    <property type="nucleotide sequence ID" value="NC_002488.3"/>
</dbReference>
<dbReference type="SMR" id="Q9PHA5"/>
<dbReference type="STRING" id="160492.XF_0039"/>
<dbReference type="KEGG" id="xfa:XF_0039"/>
<dbReference type="eggNOG" id="COG1970">
    <property type="taxonomic scope" value="Bacteria"/>
</dbReference>
<dbReference type="HOGENOM" id="CLU_095787_0_0_6"/>
<dbReference type="Proteomes" id="UP000000812">
    <property type="component" value="Chromosome"/>
</dbReference>
<dbReference type="GO" id="GO:0005886">
    <property type="term" value="C:plasma membrane"/>
    <property type="evidence" value="ECO:0007669"/>
    <property type="project" value="UniProtKB-SubCell"/>
</dbReference>
<dbReference type="GO" id="GO:0008381">
    <property type="term" value="F:mechanosensitive monoatomic ion channel activity"/>
    <property type="evidence" value="ECO:0007669"/>
    <property type="project" value="UniProtKB-UniRule"/>
</dbReference>
<dbReference type="FunFam" id="1.10.1200.120:FF:000001">
    <property type="entry name" value="Large-conductance mechanosensitive channel"/>
    <property type="match status" value="1"/>
</dbReference>
<dbReference type="Gene3D" id="1.10.1200.120">
    <property type="entry name" value="Large-conductance mechanosensitive channel, MscL, domain 1"/>
    <property type="match status" value="1"/>
</dbReference>
<dbReference type="HAMAP" id="MF_00115">
    <property type="entry name" value="MscL"/>
    <property type="match status" value="1"/>
</dbReference>
<dbReference type="InterPro" id="IPR019823">
    <property type="entry name" value="Mechanosensitive_channel_CS"/>
</dbReference>
<dbReference type="InterPro" id="IPR001185">
    <property type="entry name" value="MS_channel"/>
</dbReference>
<dbReference type="InterPro" id="IPR037673">
    <property type="entry name" value="MSC/AndL"/>
</dbReference>
<dbReference type="InterPro" id="IPR036019">
    <property type="entry name" value="MscL_channel"/>
</dbReference>
<dbReference type="NCBIfam" id="TIGR00220">
    <property type="entry name" value="mscL"/>
    <property type="match status" value="1"/>
</dbReference>
<dbReference type="NCBIfam" id="NF001843">
    <property type="entry name" value="PRK00567.1-4"/>
    <property type="match status" value="1"/>
</dbReference>
<dbReference type="PANTHER" id="PTHR30266:SF2">
    <property type="entry name" value="LARGE-CONDUCTANCE MECHANOSENSITIVE CHANNEL"/>
    <property type="match status" value="1"/>
</dbReference>
<dbReference type="PANTHER" id="PTHR30266">
    <property type="entry name" value="MECHANOSENSITIVE CHANNEL MSCL"/>
    <property type="match status" value="1"/>
</dbReference>
<dbReference type="Pfam" id="PF01741">
    <property type="entry name" value="MscL"/>
    <property type="match status" value="1"/>
</dbReference>
<dbReference type="PRINTS" id="PR01264">
    <property type="entry name" value="MECHCHANNEL"/>
</dbReference>
<dbReference type="SUPFAM" id="SSF81330">
    <property type="entry name" value="Gated mechanosensitive channel"/>
    <property type="match status" value="1"/>
</dbReference>
<dbReference type="PROSITE" id="PS01327">
    <property type="entry name" value="MSCL"/>
    <property type="match status" value="1"/>
</dbReference>
<sequence>MSFIREFKEFVMRGNVIDLAVAVVIGAAFGKIVTALVDKIISPLIGVMVGGIDFSKLSLTLKAATVDAAGKEVPAVVIGYGDFLNTILQFIIIAFAIFIIVKMINKVINKQPLPPETPSEDVLLLREIRDSLKK</sequence>